<name>RNT_HAEI8</name>
<keyword id="KW-0269">Exonuclease</keyword>
<keyword id="KW-0378">Hydrolase</keyword>
<keyword id="KW-0460">Magnesium</keyword>
<keyword id="KW-0479">Metal-binding</keyword>
<keyword id="KW-0540">Nuclease</keyword>
<keyword id="KW-0819">tRNA processing</keyword>
<evidence type="ECO:0000255" key="1">
    <source>
        <dbReference type="HAMAP-Rule" id="MF_00157"/>
    </source>
</evidence>
<gene>
    <name evidence="1" type="primary">rnt</name>
    <name type="ordered locus">NTHI0442</name>
</gene>
<proteinExistence type="inferred from homology"/>
<accession>Q4QNL5</accession>
<dbReference type="EC" id="3.1.13.-" evidence="1"/>
<dbReference type="EMBL" id="CP000057">
    <property type="protein sequence ID" value="AAX87382.1"/>
    <property type="molecule type" value="Genomic_DNA"/>
</dbReference>
<dbReference type="RefSeq" id="WP_011271988.1">
    <property type="nucleotide sequence ID" value="NC_007146.2"/>
</dbReference>
<dbReference type="SMR" id="Q4QNL5"/>
<dbReference type="GeneID" id="93219273"/>
<dbReference type="KEGG" id="hit:NTHI0442"/>
<dbReference type="HOGENOM" id="CLU_082724_0_0_6"/>
<dbReference type="Proteomes" id="UP000002525">
    <property type="component" value="Chromosome"/>
</dbReference>
<dbReference type="GO" id="GO:0005829">
    <property type="term" value="C:cytosol"/>
    <property type="evidence" value="ECO:0007669"/>
    <property type="project" value="TreeGrafter"/>
</dbReference>
<dbReference type="GO" id="GO:0008408">
    <property type="term" value="F:3'-5' exonuclease activity"/>
    <property type="evidence" value="ECO:0007669"/>
    <property type="project" value="TreeGrafter"/>
</dbReference>
<dbReference type="GO" id="GO:0000287">
    <property type="term" value="F:magnesium ion binding"/>
    <property type="evidence" value="ECO:0007669"/>
    <property type="project" value="UniProtKB-UniRule"/>
</dbReference>
<dbReference type="GO" id="GO:0003676">
    <property type="term" value="F:nucleic acid binding"/>
    <property type="evidence" value="ECO:0007669"/>
    <property type="project" value="InterPro"/>
</dbReference>
<dbReference type="GO" id="GO:0016896">
    <property type="term" value="F:RNA exonuclease activity, producing 5'-phosphomonoesters"/>
    <property type="evidence" value="ECO:0007669"/>
    <property type="project" value="UniProtKB-UniRule"/>
</dbReference>
<dbReference type="GO" id="GO:0045004">
    <property type="term" value="P:DNA replication proofreading"/>
    <property type="evidence" value="ECO:0007669"/>
    <property type="project" value="TreeGrafter"/>
</dbReference>
<dbReference type="GO" id="GO:0008033">
    <property type="term" value="P:tRNA processing"/>
    <property type="evidence" value="ECO:0007669"/>
    <property type="project" value="UniProtKB-KW"/>
</dbReference>
<dbReference type="CDD" id="cd06134">
    <property type="entry name" value="RNaseT"/>
    <property type="match status" value="1"/>
</dbReference>
<dbReference type="FunFam" id="3.30.420.10:FF:000009">
    <property type="entry name" value="Ribonuclease T"/>
    <property type="match status" value="1"/>
</dbReference>
<dbReference type="Gene3D" id="3.30.420.10">
    <property type="entry name" value="Ribonuclease H-like superfamily/Ribonuclease H"/>
    <property type="match status" value="1"/>
</dbReference>
<dbReference type="HAMAP" id="MF_00157">
    <property type="entry name" value="RNase_T"/>
    <property type="match status" value="1"/>
</dbReference>
<dbReference type="InterPro" id="IPR013520">
    <property type="entry name" value="Exonuclease_RNaseT/DNA_pol3"/>
</dbReference>
<dbReference type="InterPro" id="IPR005987">
    <property type="entry name" value="RNase_T"/>
</dbReference>
<dbReference type="InterPro" id="IPR012337">
    <property type="entry name" value="RNaseH-like_sf"/>
</dbReference>
<dbReference type="InterPro" id="IPR036397">
    <property type="entry name" value="RNaseH_sf"/>
</dbReference>
<dbReference type="NCBIfam" id="TIGR01298">
    <property type="entry name" value="RNaseT"/>
    <property type="match status" value="1"/>
</dbReference>
<dbReference type="PANTHER" id="PTHR30231">
    <property type="entry name" value="DNA POLYMERASE III SUBUNIT EPSILON"/>
    <property type="match status" value="1"/>
</dbReference>
<dbReference type="PANTHER" id="PTHR30231:SF2">
    <property type="entry name" value="RIBONUCLEASE T"/>
    <property type="match status" value="1"/>
</dbReference>
<dbReference type="Pfam" id="PF00929">
    <property type="entry name" value="RNase_T"/>
    <property type="match status" value="1"/>
</dbReference>
<dbReference type="SMART" id="SM00479">
    <property type="entry name" value="EXOIII"/>
    <property type="match status" value="1"/>
</dbReference>
<dbReference type="SUPFAM" id="SSF53098">
    <property type="entry name" value="Ribonuclease H-like"/>
    <property type="match status" value="1"/>
</dbReference>
<reference key="1">
    <citation type="journal article" date="2005" name="J. Bacteriol.">
        <title>Genomic sequence of an otitis media isolate of nontypeable Haemophilus influenzae: comparative study with H. influenzae serotype d, strain KW20.</title>
        <authorList>
            <person name="Harrison A."/>
            <person name="Dyer D.W."/>
            <person name="Gillaspy A."/>
            <person name="Ray W.C."/>
            <person name="Mungur R."/>
            <person name="Carson M.B."/>
            <person name="Zhong H."/>
            <person name="Gipson J."/>
            <person name="Gipson M."/>
            <person name="Johnson L.S."/>
            <person name="Lewis L."/>
            <person name="Bakaletz L.O."/>
            <person name="Munson R.S. Jr."/>
        </authorList>
    </citation>
    <scope>NUCLEOTIDE SEQUENCE [LARGE SCALE GENOMIC DNA]</scope>
    <source>
        <strain>86-028NP</strain>
    </source>
</reference>
<organism>
    <name type="scientific">Haemophilus influenzae (strain 86-028NP)</name>
    <dbReference type="NCBI Taxonomy" id="281310"/>
    <lineage>
        <taxon>Bacteria</taxon>
        <taxon>Pseudomonadati</taxon>
        <taxon>Pseudomonadota</taxon>
        <taxon>Gammaproteobacteria</taxon>
        <taxon>Pasteurellales</taxon>
        <taxon>Pasteurellaceae</taxon>
        <taxon>Haemophilus</taxon>
    </lineage>
</organism>
<protein>
    <recommendedName>
        <fullName evidence="1">Ribonuclease T</fullName>
        <ecNumber evidence="1">3.1.13.-</ecNumber>
    </recommendedName>
    <alternativeName>
        <fullName evidence="1">Exoribonuclease T</fullName>
        <shortName evidence="1">RNase T</shortName>
    </alternativeName>
</protein>
<feature type="chain" id="PRO_1000011395" description="Ribonuclease T">
    <location>
        <begin position="1"/>
        <end position="229"/>
    </location>
</feature>
<feature type="domain" description="Exonuclease" evidence="1">
    <location>
        <begin position="23"/>
        <end position="197"/>
    </location>
</feature>
<feature type="active site" description="Proton donor/acceptor" evidence="1">
    <location>
        <position position="184"/>
    </location>
</feature>
<feature type="binding site" evidence="1">
    <location>
        <position position="26"/>
    </location>
    <ligand>
        <name>Mg(2+)</name>
        <dbReference type="ChEBI" id="CHEBI:18420"/>
        <label>1</label>
        <note>catalytic</note>
    </ligand>
</feature>
<feature type="binding site" evidence="1">
    <location>
        <position position="26"/>
    </location>
    <ligand>
        <name>Mg(2+)</name>
        <dbReference type="ChEBI" id="CHEBI:18420"/>
        <label>2</label>
        <note>catalytic</note>
    </ligand>
</feature>
<feature type="binding site" evidence="1">
    <location>
        <position position="28"/>
    </location>
    <ligand>
        <name>Mg(2+)</name>
        <dbReference type="ChEBI" id="CHEBI:18420"/>
        <label>2</label>
        <note>catalytic</note>
    </ligand>
</feature>
<feature type="binding site" evidence="1">
    <location>
        <position position="184"/>
    </location>
    <ligand>
        <name>Mg(2+)</name>
        <dbReference type="ChEBI" id="CHEBI:18420"/>
        <label>2</label>
        <note>catalytic</note>
    </ligand>
</feature>
<feature type="binding site" evidence="1">
    <location>
        <position position="189"/>
    </location>
    <ligand>
        <name>Mg(2+)</name>
        <dbReference type="ChEBI" id="CHEBI:18420"/>
        <label>2</label>
        <note>catalytic</note>
    </ligand>
</feature>
<feature type="site" description="Important for substrate binding and specificity" evidence="1">
    <location>
        <position position="32"/>
    </location>
</feature>
<feature type="site" description="Important for substrate binding and specificity" evidence="1">
    <location>
        <position position="80"/>
    </location>
</feature>
<feature type="site" description="Important for substrate binding and specificity" evidence="1">
    <location>
        <position position="127"/>
    </location>
</feature>
<feature type="site" description="Important for substrate binding and specificity" evidence="1">
    <location>
        <position position="149"/>
    </location>
</feature>
<comment type="function">
    <text evidence="1">Trims short 3' overhangs of a variety of RNA species, leaving a one or two nucleotide 3' overhang. Responsible for the end-turnover of tRNA: specifically removes the terminal AMP residue from uncharged tRNA (tRNA-C-C-A). Also appears to be involved in tRNA biosynthesis.</text>
</comment>
<comment type="cofactor">
    <cofactor evidence="1">
        <name>Mg(2+)</name>
        <dbReference type="ChEBI" id="CHEBI:18420"/>
    </cofactor>
    <text evidence="1">Binds two Mg(2+) per subunit. The active form of the enzyme binds two Mg(2+) ions in its active site. The first Mg(2+) forms only one salt bridge with the protein.</text>
</comment>
<comment type="subunit">
    <text evidence="1">Homodimer.</text>
</comment>
<comment type="similarity">
    <text evidence="1">Belongs to the RNase T family.</text>
</comment>
<sequence>MSDSQEIPYHNQLKNRFRGYFPVIIDVETAGFDAKKDALLELAAITLKMDENGYLHPDQKCHFHIKPFEGANINPESLKFNGIDIHNPLRGAVSELDAITGLFQMVRRGQKDADCQRSIIVAHNATFDQSFVMAAAERTGVKRNPFHPFGMFDTASLAGLMFGQTVLVKACQAAKIPFDGKQAHSALYDTERTAKLFCYMVNHLKDLGGFPHIASELEQEKTTEKETAL</sequence>